<organism>
    <name type="scientific">Mycoplasma pneumoniae (strain ATCC 29342 / M129 / Subtype 1)</name>
    <name type="common">Mycoplasmoides pneumoniae</name>
    <dbReference type="NCBI Taxonomy" id="272634"/>
    <lineage>
        <taxon>Bacteria</taxon>
        <taxon>Bacillati</taxon>
        <taxon>Mycoplasmatota</taxon>
        <taxon>Mycoplasmoidales</taxon>
        <taxon>Mycoplasmoidaceae</taxon>
        <taxon>Mycoplasmoides</taxon>
    </lineage>
</organism>
<protein>
    <recommendedName>
        <fullName evidence="1">Thymidylate synthase</fullName>
        <shortName evidence="1">TS</shortName>
        <shortName evidence="1">TSase</shortName>
        <ecNumber evidence="1">2.1.1.45</ecNumber>
    </recommendedName>
</protein>
<accession>P78029</accession>
<accession>Q50354</accession>
<keyword id="KW-0963">Cytoplasm</keyword>
<keyword id="KW-0489">Methyltransferase</keyword>
<keyword id="KW-0545">Nucleotide biosynthesis</keyword>
<keyword id="KW-1185">Reference proteome</keyword>
<keyword id="KW-0808">Transferase</keyword>
<sequence length="287" mass="33591">MQQYLDLARYVLEHGKYRPNRTDTAGIGVFGYQMHFDISKHFPLLTTKKVHWKSIVHELLWFIKGDTNIKYLVDNKVNIWNEWPYESFKKSPHFNGESQKEFIERIRQDAKFAQQFGNLGPVYGKQWRDFNGVDQLKKVIAQIKVNPFSRRLIVSSWNPNEVDQMLLPPCHSLYQFYVQDGQLSCQLYQRSGDIFLGIPFNIASYSLLVYLVAKETNLKPGSFVHTIGDAHIYENHLEQIKLQLTRQPKPLPKVVLKSDKSIFDYQFDDIELVDYDHHPTIKGEVAV</sequence>
<reference key="1">
    <citation type="journal article" date="1996" name="Nucleic Acids Res.">
        <title>Complete sequence analysis of the genome of the bacterium Mycoplasma pneumoniae.</title>
        <authorList>
            <person name="Himmelreich R."/>
            <person name="Hilbert H."/>
            <person name="Plagens H."/>
            <person name="Pirkl E."/>
            <person name="Li B.-C."/>
            <person name="Herrmann R."/>
        </authorList>
    </citation>
    <scope>NUCLEOTIDE SEQUENCE [LARGE SCALE GENOMIC DNA]</scope>
    <source>
        <strain>ATCC 29342 / M129 / Subtype 1</strain>
    </source>
</reference>
<reference key="2">
    <citation type="journal article" date="1994" name="Mol. Microbiol.">
        <title>Identification and characterization of hitherto unknown Mycoplasma pneumoniae proteins.</title>
        <authorList>
            <person name="Proft T."/>
            <person name="Herrmann R."/>
        </authorList>
    </citation>
    <scope>NUCLEOTIDE SEQUENCE [GENOMIC DNA] OF 163-212</scope>
    <source>
        <strain>ATCC 29342 / M129 / Subtype 1</strain>
    </source>
</reference>
<proteinExistence type="inferred from homology"/>
<comment type="function">
    <text evidence="1">Catalyzes the reductive methylation of 2'-deoxyuridine-5'-monophosphate (dUMP) to 2'-deoxythymidine-5'-monophosphate (dTMP) while utilizing 5,10-methylenetetrahydrofolate (mTHF) as the methyl donor and reductant in the reaction, yielding dihydrofolate (DHF) as a by-product. This enzymatic reaction provides an intracellular de novo source of dTMP, an essential precursor for DNA biosynthesis.</text>
</comment>
<comment type="catalytic activity">
    <reaction evidence="1">
        <text>dUMP + (6R)-5,10-methylene-5,6,7,8-tetrahydrofolate = 7,8-dihydrofolate + dTMP</text>
        <dbReference type="Rhea" id="RHEA:12104"/>
        <dbReference type="ChEBI" id="CHEBI:15636"/>
        <dbReference type="ChEBI" id="CHEBI:57451"/>
        <dbReference type="ChEBI" id="CHEBI:63528"/>
        <dbReference type="ChEBI" id="CHEBI:246422"/>
        <dbReference type="EC" id="2.1.1.45"/>
    </reaction>
</comment>
<comment type="pathway">
    <text evidence="1">Pyrimidine metabolism; dTTP biosynthesis.</text>
</comment>
<comment type="subunit">
    <text evidence="1">Homodimer.</text>
</comment>
<comment type="subcellular location">
    <subcellularLocation>
        <location evidence="1">Cytoplasm</location>
    </subcellularLocation>
</comment>
<comment type="similarity">
    <text evidence="1">Belongs to the thymidylate synthase family. Bacterial-type ThyA subfamily.</text>
</comment>
<comment type="sequence caution" evidence="2">
    <conflict type="erroneous initiation">
        <sequence resource="EMBL-CDS" id="AAB96164"/>
    </conflict>
</comment>
<dbReference type="EC" id="2.1.1.45" evidence="1"/>
<dbReference type="EMBL" id="U00089">
    <property type="protein sequence ID" value="AAB96164.1"/>
    <property type="status" value="ALT_INIT"/>
    <property type="molecule type" value="Genomic_DNA"/>
</dbReference>
<dbReference type="EMBL" id="Z32654">
    <property type="protein sequence ID" value="CAA83575.1"/>
    <property type="molecule type" value="Genomic_DNA"/>
</dbReference>
<dbReference type="PIR" id="S73842">
    <property type="entry name" value="S73842"/>
</dbReference>
<dbReference type="RefSeq" id="NP_110008.2">
    <property type="nucleotide sequence ID" value="NC_000912.1"/>
</dbReference>
<dbReference type="RefSeq" id="WP_010874676.1">
    <property type="nucleotide sequence ID" value="NZ_OU342337.1"/>
</dbReference>
<dbReference type="SMR" id="P78029"/>
<dbReference type="IntAct" id="P78029">
    <property type="interactions" value="3"/>
</dbReference>
<dbReference type="STRING" id="272634.MPN_320"/>
<dbReference type="EnsemblBacteria" id="AAB96164">
    <property type="protein sequence ID" value="AAB96164"/>
    <property type="gene ID" value="MPN_320"/>
</dbReference>
<dbReference type="KEGG" id="mpn:MPN_320"/>
<dbReference type="PATRIC" id="fig|272634.6.peg.344"/>
<dbReference type="HOGENOM" id="CLU_021669_0_2_14"/>
<dbReference type="OrthoDB" id="9774633at2"/>
<dbReference type="BioCyc" id="MPNE272634:G1GJ3-511-MONOMER"/>
<dbReference type="UniPathway" id="UPA00575"/>
<dbReference type="Proteomes" id="UP000000808">
    <property type="component" value="Chromosome"/>
</dbReference>
<dbReference type="GO" id="GO:0005829">
    <property type="term" value="C:cytosol"/>
    <property type="evidence" value="ECO:0007669"/>
    <property type="project" value="TreeGrafter"/>
</dbReference>
<dbReference type="GO" id="GO:0004799">
    <property type="term" value="F:thymidylate synthase activity"/>
    <property type="evidence" value="ECO:0007669"/>
    <property type="project" value="UniProtKB-UniRule"/>
</dbReference>
<dbReference type="GO" id="GO:0006231">
    <property type="term" value="P:dTMP biosynthetic process"/>
    <property type="evidence" value="ECO:0007669"/>
    <property type="project" value="UniProtKB-UniRule"/>
</dbReference>
<dbReference type="GO" id="GO:0006235">
    <property type="term" value="P:dTTP biosynthetic process"/>
    <property type="evidence" value="ECO:0007669"/>
    <property type="project" value="UniProtKB-UniRule"/>
</dbReference>
<dbReference type="GO" id="GO:0032259">
    <property type="term" value="P:methylation"/>
    <property type="evidence" value="ECO:0007669"/>
    <property type="project" value="UniProtKB-KW"/>
</dbReference>
<dbReference type="CDD" id="cd00351">
    <property type="entry name" value="TS_Pyrimidine_HMase"/>
    <property type="match status" value="1"/>
</dbReference>
<dbReference type="FunFam" id="3.30.572.10:FF:000007">
    <property type="entry name" value="thymidylate synthase isoform X2"/>
    <property type="match status" value="1"/>
</dbReference>
<dbReference type="Gene3D" id="3.30.572.10">
    <property type="entry name" value="Thymidylate synthase/dCMP hydroxymethylase domain"/>
    <property type="match status" value="1"/>
</dbReference>
<dbReference type="HAMAP" id="MF_00008">
    <property type="entry name" value="Thymidy_synth_bact"/>
    <property type="match status" value="1"/>
</dbReference>
<dbReference type="InterPro" id="IPR045097">
    <property type="entry name" value="Thymidate_synth/dCMP_Mease"/>
</dbReference>
<dbReference type="InterPro" id="IPR023451">
    <property type="entry name" value="Thymidate_synth/dCMP_Mease_dom"/>
</dbReference>
<dbReference type="InterPro" id="IPR036926">
    <property type="entry name" value="Thymidate_synth/dCMP_Mease_sf"/>
</dbReference>
<dbReference type="InterPro" id="IPR000398">
    <property type="entry name" value="Thymidylate_synthase"/>
</dbReference>
<dbReference type="InterPro" id="IPR020940">
    <property type="entry name" value="Thymidylate_synthase_AS"/>
</dbReference>
<dbReference type="NCBIfam" id="NF002496">
    <property type="entry name" value="PRK01827.1-2"/>
    <property type="match status" value="1"/>
</dbReference>
<dbReference type="NCBIfam" id="NF002497">
    <property type="entry name" value="PRK01827.1-3"/>
    <property type="match status" value="1"/>
</dbReference>
<dbReference type="NCBIfam" id="TIGR03284">
    <property type="entry name" value="thym_sym"/>
    <property type="match status" value="1"/>
</dbReference>
<dbReference type="PANTHER" id="PTHR11548:SF9">
    <property type="entry name" value="THYMIDYLATE SYNTHASE"/>
    <property type="match status" value="1"/>
</dbReference>
<dbReference type="PANTHER" id="PTHR11548">
    <property type="entry name" value="THYMIDYLATE SYNTHASE 1"/>
    <property type="match status" value="1"/>
</dbReference>
<dbReference type="Pfam" id="PF00303">
    <property type="entry name" value="Thymidylat_synt"/>
    <property type="match status" value="1"/>
</dbReference>
<dbReference type="PRINTS" id="PR00108">
    <property type="entry name" value="THYMDSNTHASE"/>
</dbReference>
<dbReference type="SUPFAM" id="SSF55831">
    <property type="entry name" value="Thymidylate synthase/dCMP hydroxymethylase"/>
    <property type="match status" value="1"/>
</dbReference>
<dbReference type="PROSITE" id="PS00091">
    <property type="entry name" value="THYMIDYLATE_SYNTHASE"/>
    <property type="match status" value="1"/>
</dbReference>
<name>TYSY_MYCPN</name>
<gene>
    <name evidence="1" type="primary">thyA</name>
    <name type="ordered locus">MPN_320</name>
    <name type="ORF">MP516</name>
</gene>
<evidence type="ECO:0000255" key="1">
    <source>
        <dbReference type="HAMAP-Rule" id="MF_00008"/>
    </source>
</evidence>
<evidence type="ECO:0000305" key="2"/>
<feature type="chain" id="PRO_0000140987" description="Thymidylate synthase">
    <location>
        <begin position="1"/>
        <end position="287"/>
    </location>
</feature>
<feature type="active site" description="Nucleophile" evidence="1">
    <location>
        <position position="170"/>
    </location>
</feature>
<feature type="binding site" description="in other chain" evidence="1">
    <location>
        <position position="21"/>
    </location>
    <ligand>
        <name>dUMP</name>
        <dbReference type="ChEBI" id="CHEBI:246422"/>
        <note>ligand shared between dimeric partners</note>
    </ligand>
</feature>
<feature type="binding site" evidence="1">
    <location>
        <position position="51"/>
    </location>
    <ligand>
        <name>(6R)-5,10-methylene-5,6,7,8-tetrahydrofolate</name>
        <dbReference type="ChEBI" id="CHEBI:15636"/>
    </ligand>
</feature>
<feature type="binding site" evidence="1">
    <location>
        <begin position="150"/>
        <end position="151"/>
    </location>
    <ligand>
        <name>dUMP</name>
        <dbReference type="ChEBI" id="CHEBI:246422"/>
        <note>ligand shared between dimeric partners</note>
    </ligand>
</feature>
<feature type="binding site" description="in other chain" evidence="1">
    <location>
        <begin position="190"/>
        <end position="193"/>
    </location>
    <ligand>
        <name>dUMP</name>
        <dbReference type="ChEBI" id="CHEBI:246422"/>
        <note>ligand shared between dimeric partners</note>
    </ligand>
</feature>
<feature type="binding site" evidence="1">
    <location>
        <position position="193"/>
    </location>
    <ligand>
        <name>(6R)-5,10-methylene-5,6,7,8-tetrahydrofolate</name>
        <dbReference type="ChEBI" id="CHEBI:15636"/>
    </ligand>
</feature>
<feature type="binding site" description="in other chain" evidence="1">
    <location>
        <position position="201"/>
    </location>
    <ligand>
        <name>dUMP</name>
        <dbReference type="ChEBI" id="CHEBI:246422"/>
        <note>ligand shared between dimeric partners</note>
    </ligand>
</feature>
<feature type="binding site" description="in other chain" evidence="1">
    <location>
        <begin position="231"/>
        <end position="233"/>
    </location>
    <ligand>
        <name>dUMP</name>
        <dbReference type="ChEBI" id="CHEBI:246422"/>
        <note>ligand shared between dimeric partners</note>
    </ligand>
</feature>
<feature type="binding site" evidence="1">
    <location>
        <position position="286"/>
    </location>
    <ligand>
        <name>(6R)-5,10-methylene-5,6,7,8-tetrahydrofolate</name>
        <dbReference type="ChEBI" id="CHEBI:15636"/>
    </ligand>
</feature>
<feature type="sequence conflict" description="In Ref. 2." evidence="2" ref="2">
    <original>SYSLLVYLV</original>
    <variation>FLLSYGA</variation>
    <location>
        <begin position="204"/>
        <end position="212"/>
    </location>
</feature>